<keyword id="KW-1003">Cell membrane</keyword>
<keyword id="KW-0472">Membrane</keyword>
<keyword id="KW-0614">Plasmid</keyword>
<keyword id="KW-1185">Reference proteome</keyword>
<keyword id="KW-0786">Thiamine pyrophosphate</keyword>
<keyword id="KW-0812">Transmembrane</keyword>
<keyword id="KW-1133">Transmembrane helix</keyword>
<name>Y4MO_SINFN</name>
<evidence type="ECO:0000250" key="1"/>
<evidence type="ECO:0000255" key="2"/>
<evidence type="ECO:0000305" key="3"/>
<accession>P55574</accession>
<reference key="1">
    <citation type="journal article" date="1997" name="Nature">
        <title>Molecular basis of symbiosis between Rhizobium and legumes.</title>
        <authorList>
            <person name="Freiberg C.A."/>
            <person name="Fellay R."/>
            <person name="Bairoch A."/>
            <person name="Broughton W.J."/>
            <person name="Rosenthal A."/>
            <person name="Perret X."/>
        </authorList>
    </citation>
    <scope>NUCLEOTIDE SEQUENCE [LARGE SCALE GENOMIC DNA]</scope>
    <source>
        <strain>NBRC 101917 / NGR234</strain>
    </source>
</reference>
<reference key="2">
    <citation type="journal article" date="2009" name="Appl. Environ. Microbiol.">
        <title>Rhizobium sp. strain NGR234 possesses a remarkable number of secretion systems.</title>
        <authorList>
            <person name="Schmeisser C."/>
            <person name="Liesegang H."/>
            <person name="Krysciak D."/>
            <person name="Bakkou N."/>
            <person name="Le Quere A."/>
            <person name="Wollherr A."/>
            <person name="Heinemeyer I."/>
            <person name="Morgenstern B."/>
            <person name="Pommerening-Roeser A."/>
            <person name="Flores M."/>
            <person name="Palacios R."/>
            <person name="Brenner S."/>
            <person name="Gottschalk G."/>
            <person name="Schmitz R.A."/>
            <person name="Broughton W.J."/>
            <person name="Perret X."/>
            <person name="Strittmatter A.W."/>
            <person name="Streit W.R."/>
        </authorList>
    </citation>
    <scope>NUCLEOTIDE SEQUENCE [LARGE SCALE GENOMIC DNA]</scope>
    <source>
        <strain>NBRC 101917 / NGR234</strain>
    </source>
</reference>
<comment type="cofactor">
    <cofactor evidence="1">
        <name>thiamine diphosphate</name>
        <dbReference type="ChEBI" id="CHEBI:58937"/>
    </cofactor>
    <text evidence="1">Binds 1 thiamine pyrophosphate per subunit.</text>
</comment>
<comment type="subcellular location">
    <subcellularLocation>
        <location evidence="3">Cell membrane</location>
        <topology evidence="3">Multi-pass membrane protein</topology>
    </subcellularLocation>
</comment>
<comment type="similarity">
    <text evidence="3">Belongs to the transketolase family.</text>
</comment>
<comment type="caution">
    <text evidence="3">Could be the product of a pseudogene. Corresponds to the N-terminal of members of this family.</text>
</comment>
<geneLocation type="plasmid">
    <name>sym pNGR234a</name>
</geneLocation>
<protein>
    <recommendedName>
        <fullName>Putative uncharacterized transketolase family protein y4mO</fullName>
    </recommendedName>
</protein>
<gene>
    <name type="ordered locus">NGR_a02440</name>
    <name type="ORF">y4mO</name>
</gene>
<proteinExistence type="uncertain"/>
<feature type="chain" id="PRO_0000191913" description="Putative uncharacterized transketolase family protein y4mO">
    <location>
        <begin position="1"/>
        <end position="279"/>
    </location>
</feature>
<feature type="transmembrane region" description="Helical" evidence="2">
    <location>
        <begin position="31"/>
        <end position="51"/>
    </location>
</feature>
<feature type="transmembrane region" description="Helical" evidence="2">
    <location>
        <begin position="67"/>
        <end position="87"/>
    </location>
</feature>
<feature type="transmembrane region" description="Helical" evidence="2">
    <location>
        <begin position="115"/>
        <end position="135"/>
    </location>
</feature>
<sequence>MAQIGHNISLPERARRIRRHALRMGEVQGQGYIAQALGIADVLAVAYFHATTYRPDDPEWEGRDRFLLSIGHYAIALYAALIEAKIIPEDELETYGADDSRLPMSGMAAYTPGMEITGGSLGHGLGIAVGMSLALKRKGSRSFVYNLFSDGELDEGSTWEAAMSAGSYKLDNLIGIVDVNQMQADGPSLGVLNFEPLGPKFEAFGWYVQRIDGNDIDALVDAFDNARQHRHPQPRIIICDTKMAKGVPFLEARERNHFLRVEPQEWAEAIRIIDAGVTA</sequence>
<dbReference type="EMBL" id="U00090">
    <property type="protein sequence ID" value="AAB91778.1"/>
    <property type="molecule type" value="Genomic_DNA"/>
</dbReference>
<dbReference type="RefSeq" id="NP_443981.1">
    <property type="nucleotide sequence ID" value="NC_000914.2"/>
</dbReference>
<dbReference type="RefSeq" id="WP_010875269.1">
    <property type="nucleotide sequence ID" value="NC_000914.2"/>
</dbReference>
<dbReference type="SMR" id="P55574"/>
<dbReference type="KEGG" id="rhi:NGR_a02440"/>
<dbReference type="PATRIC" id="fig|394.7.peg.254"/>
<dbReference type="eggNOG" id="COG3959">
    <property type="taxonomic scope" value="Bacteria"/>
</dbReference>
<dbReference type="HOGENOM" id="CLU_009227_4_1_5"/>
<dbReference type="OrthoDB" id="8732661at2"/>
<dbReference type="Proteomes" id="UP000001054">
    <property type="component" value="Plasmid pNGR234a"/>
</dbReference>
<dbReference type="GO" id="GO:0005886">
    <property type="term" value="C:plasma membrane"/>
    <property type="evidence" value="ECO:0007669"/>
    <property type="project" value="UniProtKB-SubCell"/>
</dbReference>
<dbReference type="CDD" id="cd02012">
    <property type="entry name" value="TPP_TK"/>
    <property type="match status" value="1"/>
</dbReference>
<dbReference type="Gene3D" id="3.40.50.970">
    <property type="match status" value="1"/>
</dbReference>
<dbReference type="InterPro" id="IPR029061">
    <property type="entry name" value="THDP-binding"/>
</dbReference>
<dbReference type="InterPro" id="IPR005474">
    <property type="entry name" value="Transketolase_N"/>
</dbReference>
<dbReference type="PANTHER" id="PTHR47514">
    <property type="entry name" value="TRANSKETOLASE N-TERMINAL SECTION-RELATED"/>
    <property type="match status" value="1"/>
</dbReference>
<dbReference type="PANTHER" id="PTHR47514:SF1">
    <property type="entry name" value="TRANSKETOLASE N-TERMINAL SECTION-RELATED"/>
    <property type="match status" value="1"/>
</dbReference>
<dbReference type="Pfam" id="PF00456">
    <property type="entry name" value="Transketolase_N"/>
    <property type="match status" value="1"/>
</dbReference>
<dbReference type="SUPFAM" id="SSF52518">
    <property type="entry name" value="Thiamin diphosphate-binding fold (THDP-binding)"/>
    <property type="match status" value="1"/>
</dbReference>
<organism>
    <name type="scientific">Sinorhizobium fredii (strain NBRC 101917 / NGR234)</name>
    <dbReference type="NCBI Taxonomy" id="394"/>
    <lineage>
        <taxon>Bacteria</taxon>
        <taxon>Pseudomonadati</taxon>
        <taxon>Pseudomonadota</taxon>
        <taxon>Alphaproteobacteria</taxon>
        <taxon>Hyphomicrobiales</taxon>
        <taxon>Rhizobiaceae</taxon>
        <taxon>Sinorhizobium/Ensifer group</taxon>
        <taxon>Sinorhizobium</taxon>
    </lineage>
</organism>